<evidence type="ECO:0000255" key="1"/>
<evidence type="ECO:0000255" key="2">
    <source>
        <dbReference type="PROSITE-ProRule" id="PRU00175"/>
    </source>
</evidence>
<evidence type="ECO:0000256" key="3">
    <source>
        <dbReference type="SAM" id="MobiDB-lite"/>
    </source>
</evidence>
<evidence type="ECO:0000269" key="4">
    <source>
    </source>
</evidence>
<evidence type="ECO:0000303" key="5">
    <source>
    </source>
</evidence>
<evidence type="ECO:0000305" key="6"/>
<evidence type="ECO:0000312" key="7">
    <source>
        <dbReference type="Araport" id="AT1G65040"/>
    </source>
</evidence>
<evidence type="ECO:0000312" key="8">
    <source>
        <dbReference type="EMBL" id="AAF06038.1"/>
    </source>
</evidence>
<evidence type="ECO:0000312" key="9">
    <source>
        <dbReference type="EMBL" id="AAR23700.1"/>
    </source>
</evidence>
<gene>
    <name evidence="5" type="primary">HRD1B</name>
    <name evidence="7" type="ordered locus">At1g65040</name>
    <name evidence="8" type="ORF">F16G16.4</name>
</gene>
<dbReference type="EC" id="2.3.2.27" evidence="6"/>
<dbReference type="EMBL" id="AB189470">
    <property type="protein sequence ID" value="BAD42325.1"/>
    <property type="molecule type" value="mRNA"/>
</dbReference>
<dbReference type="EMBL" id="AC009360">
    <property type="protein sequence ID" value="AAF06038.1"/>
    <property type="status" value="ALT_SEQ"/>
    <property type="molecule type" value="Genomic_DNA"/>
</dbReference>
<dbReference type="EMBL" id="CP002684">
    <property type="protein sequence ID" value="AEE34319.1"/>
    <property type="molecule type" value="Genomic_DNA"/>
</dbReference>
<dbReference type="EMBL" id="BT010730">
    <property type="protein sequence ID" value="AAR23700.1"/>
    <property type="molecule type" value="mRNA"/>
</dbReference>
<dbReference type="EMBL" id="AK228264">
    <property type="protein sequence ID" value="BAF00212.1"/>
    <property type="molecule type" value="mRNA"/>
</dbReference>
<dbReference type="PIR" id="B96674">
    <property type="entry name" value="B96674"/>
</dbReference>
<dbReference type="RefSeq" id="NP_849843.3">
    <molecule id="Q6NPT7-1"/>
    <property type="nucleotide sequence ID" value="NM_179512.4"/>
</dbReference>
<dbReference type="SMR" id="Q6NPT7"/>
<dbReference type="FunCoup" id="Q6NPT7">
    <property type="interactions" value="2487"/>
</dbReference>
<dbReference type="STRING" id="3702.Q6NPT7"/>
<dbReference type="TCDB" id="3.A.16.1.5">
    <property type="family name" value="the endoplasmic reticular retrotranslocon (er-rt) family"/>
</dbReference>
<dbReference type="PaxDb" id="3702-AT1G65040.2"/>
<dbReference type="EnsemblPlants" id="AT1G65040.2">
    <molecule id="Q6NPT7-1"/>
    <property type="protein sequence ID" value="AT1G65040.2"/>
    <property type="gene ID" value="AT1G65040"/>
</dbReference>
<dbReference type="GeneID" id="842812"/>
<dbReference type="Gramene" id="AT1G65040.2">
    <molecule id="Q6NPT7-1"/>
    <property type="protein sequence ID" value="AT1G65040.2"/>
    <property type="gene ID" value="AT1G65040"/>
</dbReference>
<dbReference type="KEGG" id="ath:AT1G65040"/>
<dbReference type="Araport" id="AT1G65040"/>
<dbReference type="TAIR" id="AT1G65040">
    <property type="gene designation" value="HRD1B"/>
</dbReference>
<dbReference type="eggNOG" id="KOG0802">
    <property type="taxonomic scope" value="Eukaryota"/>
</dbReference>
<dbReference type="HOGENOM" id="CLU_009169_4_2_1"/>
<dbReference type="InParanoid" id="Q6NPT7"/>
<dbReference type="OMA" id="TSNMNEC"/>
<dbReference type="PhylomeDB" id="Q6NPT7"/>
<dbReference type="UniPathway" id="UPA00143"/>
<dbReference type="PRO" id="PR:Q6NPT7"/>
<dbReference type="Proteomes" id="UP000006548">
    <property type="component" value="Chromosome 1"/>
</dbReference>
<dbReference type="ExpressionAtlas" id="Q6NPT7">
    <property type="expression patterns" value="baseline and differential"/>
</dbReference>
<dbReference type="GO" id="GO:0005789">
    <property type="term" value="C:endoplasmic reticulum membrane"/>
    <property type="evidence" value="ECO:0007669"/>
    <property type="project" value="UniProtKB-SubCell"/>
</dbReference>
<dbReference type="GO" id="GO:0016740">
    <property type="term" value="F:transferase activity"/>
    <property type="evidence" value="ECO:0007669"/>
    <property type="project" value="UniProtKB-KW"/>
</dbReference>
<dbReference type="GO" id="GO:0008270">
    <property type="term" value="F:zinc ion binding"/>
    <property type="evidence" value="ECO:0007669"/>
    <property type="project" value="UniProtKB-KW"/>
</dbReference>
<dbReference type="GO" id="GO:0016567">
    <property type="term" value="P:protein ubiquitination"/>
    <property type="evidence" value="ECO:0007669"/>
    <property type="project" value="UniProtKB-UniPathway"/>
</dbReference>
<dbReference type="CDD" id="cd16479">
    <property type="entry name" value="RING-H2_synoviolin"/>
    <property type="match status" value="1"/>
</dbReference>
<dbReference type="FunFam" id="3.30.40.10:FF:000194">
    <property type="entry name" value="ERAD-associated E3 ubiquitin-protein ligase HRD1A"/>
    <property type="match status" value="1"/>
</dbReference>
<dbReference type="Gene3D" id="3.30.40.10">
    <property type="entry name" value="Zinc/RING finger domain, C3HC4 (zinc finger)"/>
    <property type="match status" value="1"/>
</dbReference>
<dbReference type="InterPro" id="IPR050731">
    <property type="entry name" value="HRD1_E3_ubiq-ligases"/>
</dbReference>
<dbReference type="InterPro" id="IPR001841">
    <property type="entry name" value="Znf_RING"/>
</dbReference>
<dbReference type="InterPro" id="IPR013083">
    <property type="entry name" value="Znf_RING/FYVE/PHD"/>
</dbReference>
<dbReference type="PANTHER" id="PTHR22763:SF187">
    <property type="entry name" value="ERAD-ASSOCIATED E3 UBIQUITIN-PROTEIN LIGASE HRD1B"/>
    <property type="match status" value="1"/>
</dbReference>
<dbReference type="PANTHER" id="PTHR22763">
    <property type="entry name" value="RING ZINC FINGER PROTEIN"/>
    <property type="match status" value="1"/>
</dbReference>
<dbReference type="Pfam" id="PF13639">
    <property type="entry name" value="zf-RING_2"/>
    <property type="match status" value="1"/>
</dbReference>
<dbReference type="SMART" id="SM00184">
    <property type="entry name" value="RING"/>
    <property type="match status" value="1"/>
</dbReference>
<dbReference type="SUPFAM" id="SSF57850">
    <property type="entry name" value="RING/U-box"/>
    <property type="match status" value="1"/>
</dbReference>
<dbReference type="PROSITE" id="PS50089">
    <property type="entry name" value="ZF_RING_2"/>
    <property type="match status" value="1"/>
</dbReference>
<protein>
    <recommendedName>
        <fullName evidence="6">ERAD-associated E3 ubiquitin-protein ligase HRD1B</fullName>
        <shortName evidence="5">AtHrd1B</shortName>
        <ecNumber evidence="6">2.3.2.27</ecNumber>
    </recommendedName>
    <alternativeName>
        <fullName evidence="6">RING-type E3 ubiquitin transferase HRD1B</fullName>
    </alternativeName>
</protein>
<sequence length="460" mass="52127">MIQLKVYAGLSTLATLVVIYHAFSSRGQFYPATVYLSTSKINLVVLLNMGLVLMLSLWNLVKIVFLGSLREAEVERLNEQAWRELMEILFAITIFRQDFSVGFISLVVTLLLIKGLHWMAQKRVEYIETTPSVTLLSHVRIVSFMVFLLILDCLLTYSSIQQLIQSRKASMSVFFTFEYMILATTTVSIIVKYAFYVTDMLKEGQWEGKPVYTFYLELVRDLLHLSMYLCFFLMIFMNYGLPLHLIRELYETFRNFKIRVTDYLRYRKITSNMNDRFPDATPEELSSNDATCIICREEMTSAKKLVCGHLFHVHCLRSWLERQNTCPTCRALVVPAENATSTASGNRGPHQESLQQGTGTSSSDGQGSSVSAAASENMSRHEARFQAAASAASIYGRSIVYPSSANTLVWSQGNSLLPQTEVEAQRRFLESQIEVLTNQLRLLEKPTTVDTKGKSVADTA</sequence>
<accession>Q6NPT7</accession>
<accession>Q3ECI3</accession>
<accession>Q9SS55</accession>
<name>HRD1B_ARATH</name>
<proteinExistence type="evidence at transcript level"/>
<organism>
    <name type="scientific">Arabidopsis thaliana</name>
    <name type="common">Mouse-ear cress</name>
    <dbReference type="NCBI Taxonomy" id="3702"/>
    <lineage>
        <taxon>Eukaryota</taxon>
        <taxon>Viridiplantae</taxon>
        <taxon>Streptophyta</taxon>
        <taxon>Embryophyta</taxon>
        <taxon>Tracheophyta</taxon>
        <taxon>Spermatophyta</taxon>
        <taxon>Magnoliopsida</taxon>
        <taxon>eudicotyledons</taxon>
        <taxon>Gunneridae</taxon>
        <taxon>Pentapetalae</taxon>
        <taxon>rosids</taxon>
        <taxon>malvids</taxon>
        <taxon>Brassicales</taxon>
        <taxon>Brassicaceae</taxon>
        <taxon>Camelineae</taxon>
        <taxon>Arabidopsis</taxon>
    </lineage>
</organism>
<reference key="1">
    <citation type="journal article" date="2005" name="FEBS J.">
        <title>Gene expression in response to endoplasmic reticulum stress in Arabidopsis thaliana.</title>
        <authorList>
            <person name="Kamauchi S."/>
            <person name="Nakatani H."/>
            <person name="Nakano C."/>
            <person name="Urade R."/>
        </authorList>
    </citation>
    <scope>NUCLEOTIDE SEQUENCE [MRNA]</scope>
</reference>
<reference key="2">
    <citation type="journal article" date="2000" name="Nature">
        <title>Sequence and analysis of chromosome 1 of the plant Arabidopsis thaliana.</title>
        <authorList>
            <person name="Theologis A."/>
            <person name="Ecker J.R."/>
            <person name="Palm C.J."/>
            <person name="Federspiel N.A."/>
            <person name="Kaul S."/>
            <person name="White O."/>
            <person name="Alonso J."/>
            <person name="Altafi H."/>
            <person name="Araujo R."/>
            <person name="Bowman C.L."/>
            <person name="Brooks S.Y."/>
            <person name="Buehler E."/>
            <person name="Chan A."/>
            <person name="Chao Q."/>
            <person name="Chen H."/>
            <person name="Cheuk R.F."/>
            <person name="Chin C.W."/>
            <person name="Chung M.K."/>
            <person name="Conn L."/>
            <person name="Conway A.B."/>
            <person name="Conway A.R."/>
            <person name="Creasy T.H."/>
            <person name="Dewar K."/>
            <person name="Dunn P."/>
            <person name="Etgu P."/>
            <person name="Feldblyum T.V."/>
            <person name="Feng J.-D."/>
            <person name="Fong B."/>
            <person name="Fujii C.Y."/>
            <person name="Gill J.E."/>
            <person name="Goldsmith A.D."/>
            <person name="Haas B."/>
            <person name="Hansen N.F."/>
            <person name="Hughes B."/>
            <person name="Huizar L."/>
            <person name="Hunter J.L."/>
            <person name="Jenkins J."/>
            <person name="Johnson-Hopson C."/>
            <person name="Khan S."/>
            <person name="Khaykin E."/>
            <person name="Kim C.J."/>
            <person name="Koo H.L."/>
            <person name="Kremenetskaia I."/>
            <person name="Kurtz D.B."/>
            <person name="Kwan A."/>
            <person name="Lam B."/>
            <person name="Langin-Hooper S."/>
            <person name="Lee A."/>
            <person name="Lee J.M."/>
            <person name="Lenz C.A."/>
            <person name="Li J.H."/>
            <person name="Li Y.-P."/>
            <person name="Lin X."/>
            <person name="Liu S.X."/>
            <person name="Liu Z.A."/>
            <person name="Luros J.S."/>
            <person name="Maiti R."/>
            <person name="Marziali A."/>
            <person name="Militscher J."/>
            <person name="Miranda M."/>
            <person name="Nguyen M."/>
            <person name="Nierman W.C."/>
            <person name="Osborne B.I."/>
            <person name="Pai G."/>
            <person name="Peterson J."/>
            <person name="Pham P.K."/>
            <person name="Rizzo M."/>
            <person name="Rooney T."/>
            <person name="Rowley D."/>
            <person name="Sakano H."/>
            <person name="Salzberg S.L."/>
            <person name="Schwartz J.R."/>
            <person name="Shinn P."/>
            <person name="Southwick A.M."/>
            <person name="Sun H."/>
            <person name="Tallon L.J."/>
            <person name="Tambunga G."/>
            <person name="Toriumi M.J."/>
            <person name="Town C.D."/>
            <person name="Utterback T."/>
            <person name="Van Aken S."/>
            <person name="Vaysberg M."/>
            <person name="Vysotskaia V.S."/>
            <person name="Walker M."/>
            <person name="Wu D."/>
            <person name="Yu G."/>
            <person name="Fraser C.M."/>
            <person name="Venter J.C."/>
            <person name="Davis R.W."/>
        </authorList>
    </citation>
    <scope>NUCLEOTIDE SEQUENCE [LARGE SCALE GENOMIC DNA]</scope>
    <source>
        <strain>cv. Columbia</strain>
    </source>
</reference>
<reference key="3">
    <citation type="journal article" date="2017" name="Plant J.">
        <title>Araport11: a complete reannotation of the Arabidopsis thaliana reference genome.</title>
        <authorList>
            <person name="Cheng C.Y."/>
            <person name="Krishnakumar V."/>
            <person name="Chan A.P."/>
            <person name="Thibaud-Nissen F."/>
            <person name="Schobel S."/>
            <person name="Town C.D."/>
        </authorList>
    </citation>
    <scope>GENOME REANNOTATION</scope>
    <source>
        <strain>cv. Columbia</strain>
    </source>
</reference>
<reference evidence="9" key="4">
    <citation type="submission" date="2003-11" db="EMBL/GenBank/DDBJ databases">
        <title>Arabidopsis cDNA clones.</title>
        <authorList>
            <person name="Cheuk R.F."/>
            <person name="Chen H."/>
            <person name="Kim C.J."/>
            <person name="Shinn P."/>
            <person name="Carninci P."/>
            <person name="Hayashizaki Y."/>
            <person name="Ishida J."/>
            <person name="Kamiya A."/>
            <person name="Kawai J."/>
            <person name="Narusaka M."/>
            <person name="Sakurai T."/>
            <person name="Satou M."/>
            <person name="Seki M."/>
            <person name="Shinozaki K."/>
            <person name="Ecker J.R."/>
        </authorList>
    </citation>
    <scope>NUCLEOTIDE SEQUENCE [LARGE SCALE MRNA]</scope>
    <source>
        <strain>cv. Columbia</strain>
    </source>
</reference>
<reference key="5">
    <citation type="submission" date="2006-07" db="EMBL/GenBank/DDBJ databases">
        <title>Large-scale analysis of RIKEN Arabidopsis full-length (RAFL) cDNAs.</title>
        <authorList>
            <person name="Totoki Y."/>
            <person name="Seki M."/>
            <person name="Ishida J."/>
            <person name="Nakajima M."/>
            <person name="Enju A."/>
            <person name="Kamiya A."/>
            <person name="Narusaka M."/>
            <person name="Shin-i T."/>
            <person name="Nakagawa M."/>
            <person name="Sakamoto N."/>
            <person name="Oishi K."/>
            <person name="Kohara Y."/>
            <person name="Kobayashi M."/>
            <person name="Toyoda A."/>
            <person name="Sakaki Y."/>
            <person name="Sakurai T."/>
            <person name="Iida K."/>
            <person name="Akiyama K."/>
            <person name="Satou M."/>
            <person name="Toyoda T."/>
            <person name="Konagaya A."/>
            <person name="Carninci P."/>
            <person name="Kawai J."/>
            <person name="Hayashizaki Y."/>
            <person name="Shinozaki K."/>
        </authorList>
    </citation>
    <scope>NUCLEOTIDE SEQUENCE [LARGE SCALE MRNA]</scope>
    <source>
        <strain>cv. Columbia</strain>
    </source>
</reference>
<reference key="6">
    <citation type="journal article" date="2011" name="Proc. Natl. Acad. Sci. U.S.A.">
        <title>Conserved endoplasmic reticulum-associated degradation system to eliminate mutated receptor-like kinases in Arabidopsis.</title>
        <authorList>
            <person name="Su W."/>
            <person name="Liu Y."/>
            <person name="Xia Y."/>
            <person name="Hong Z."/>
            <person name="Li J."/>
        </authorList>
    </citation>
    <scope>FUNCTION</scope>
</reference>
<feature type="chain" id="PRO_0000431271" description="ERAD-associated E3 ubiquitin-protein ligase HRD1B">
    <location>
        <begin position="1"/>
        <end position="460"/>
    </location>
</feature>
<feature type="topological domain" description="Cytoplasmic" evidence="6">
    <location>
        <begin position="1"/>
        <end position="3"/>
    </location>
</feature>
<feature type="transmembrane region" description="Helical; Name=1" evidence="1">
    <location>
        <begin position="4"/>
        <end position="24"/>
    </location>
</feature>
<feature type="topological domain" description="Lumenal" evidence="6">
    <location>
        <begin position="25"/>
        <end position="40"/>
    </location>
</feature>
<feature type="transmembrane region" description="Helical; Name=2" evidence="1">
    <location>
        <begin position="41"/>
        <end position="61"/>
    </location>
</feature>
<feature type="topological domain" description="Cytoplasmic" evidence="6">
    <location>
        <begin position="62"/>
        <end position="98"/>
    </location>
</feature>
<feature type="transmembrane region" description="Helical; Name=3" evidence="1">
    <location>
        <begin position="99"/>
        <end position="119"/>
    </location>
</feature>
<feature type="topological domain" description="Lumenal" evidence="6">
    <location>
        <begin position="120"/>
        <end position="140"/>
    </location>
</feature>
<feature type="transmembrane region" description="Helical; Name=4" evidence="1">
    <location>
        <begin position="141"/>
        <end position="161"/>
    </location>
</feature>
<feature type="topological domain" description="Cytoplasmic" evidence="6">
    <location>
        <begin position="162"/>
        <end position="170"/>
    </location>
</feature>
<feature type="transmembrane region" description="Helical; Name=5" evidence="1">
    <location>
        <begin position="171"/>
        <end position="191"/>
    </location>
</feature>
<feature type="topological domain" description="Lumenal" evidence="6">
    <location>
        <begin position="192"/>
        <end position="225"/>
    </location>
</feature>
<feature type="transmembrane region" description="Helical; Name=6" evidence="1">
    <location>
        <begin position="226"/>
        <end position="246"/>
    </location>
</feature>
<feature type="topological domain" description="Cytoplasmic" evidence="6">
    <location>
        <begin position="247"/>
        <end position="460"/>
    </location>
</feature>
<feature type="zinc finger region" description="RING-type; atypical" evidence="2">
    <location>
        <begin position="292"/>
        <end position="330"/>
    </location>
</feature>
<feature type="region of interest" description="Disordered" evidence="3">
    <location>
        <begin position="339"/>
        <end position="378"/>
    </location>
</feature>
<feature type="compositionally biased region" description="Low complexity" evidence="3">
    <location>
        <begin position="353"/>
        <end position="375"/>
    </location>
</feature>
<comment type="function">
    <text evidence="4">Probable component of the HRD1 ubiquitin ligase complex that mediates the rapid degradation of misfolded endoplasmic reticulum (ER) proteins, a process called ER-associated degradation (ERAD). Targets the misfolded LRR receptor kinase BRI1. Functions redundantly with HRD3A.</text>
</comment>
<comment type="catalytic activity">
    <reaction evidence="6">
        <text>S-ubiquitinyl-[E2 ubiquitin-conjugating enzyme]-L-cysteine + [acceptor protein]-L-lysine = [E2 ubiquitin-conjugating enzyme]-L-cysteine + N(6)-ubiquitinyl-[acceptor protein]-L-lysine.</text>
        <dbReference type="EC" id="2.3.2.27"/>
    </reaction>
</comment>
<comment type="pathway">
    <text evidence="6">Protein modification; protein ubiquitination.</text>
</comment>
<comment type="subcellular location">
    <subcellularLocation>
        <location evidence="6">Endoplasmic reticulum membrane</location>
        <topology evidence="1">Multi-pass membrane protein</topology>
    </subcellularLocation>
</comment>
<comment type="alternative products">
    <event type="alternative splicing"/>
    <isoform>
        <id>Q6NPT7-1</id>
        <name>1</name>
        <sequence type="displayed"/>
    </isoform>
    <text>A number of isoforms are produced. According to EST sequences.</text>
</comment>
<comment type="similarity">
    <text evidence="6">Belongs to the HRD1 family.</text>
</comment>
<comment type="sequence caution" evidence="6">
    <conflict type="erroneous gene model prediction">
        <sequence resource="EMBL-CDS" id="AAF06038"/>
    </conflict>
</comment>
<keyword id="KW-0025">Alternative splicing</keyword>
<keyword id="KW-0256">Endoplasmic reticulum</keyword>
<keyword id="KW-0472">Membrane</keyword>
<keyword id="KW-0479">Metal-binding</keyword>
<keyword id="KW-1185">Reference proteome</keyword>
<keyword id="KW-0808">Transferase</keyword>
<keyword id="KW-0812">Transmembrane</keyword>
<keyword id="KW-1133">Transmembrane helix</keyword>
<keyword id="KW-0833">Ubl conjugation pathway</keyword>
<keyword id="KW-0862">Zinc</keyword>
<keyword id="KW-0863">Zinc-finger</keyword>